<keyword id="KW-0891">Chondrogenesis</keyword>
<keyword id="KW-0963">Cytoplasm</keyword>
<keyword id="KW-0517">Myogenesis</keyword>
<keyword id="KW-0539">Nucleus</keyword>
<keyword id="KW-0597">Phosphoprotein</keyword>
<keyword id="KW-1267">Proteomics identification</keyword>
<keyword id="KW-1185">Reference proteome</keyword>
<keyword id="KW-0964">Secreted</keyword>
<sequence length="82" mass="8911">MSQAGAQEAPIKKKRPPVKDEDLKGARGNLTKNQEIKSKTYQVMRECEQAGSAAPSVFSRTRTGTETVFEKPKAGPTKSVFG</sequence>
<organism>
    <name type="scientific">Homo sapiens</name>
    <name type="common">Human</name>
    <dbReference type="NCBI Taxonomy" id="9606"/>
    <lineage>
        <taxon>Eukaryota</taxon>
        <taxon>Metazoa</taxon>
        <taxon>Chordata</taxon>
        <taxon>Craniata</taxon>
        <taxon>Vertebrata</taxon>
        <taxon>Euteleostomi</taxon>
        <taxon>Mammalia</taxon>
        <taxon>Eutheria</taxon>
        <taxon>Euarchontoglires</taxon>
        <taxon>Primates</taxon>
        <taxon>Haplorrhini</taxon>
        <taxon>Catarrhini</taxon>
        <taxon>Hominidae</taxon>
        <taxon>Homo</taxon>
    </lineage>
</organism>
<name>MSTN1_HUMAN</name>
<dbReference type="EMBL" id="AJ276556">
    <property type="protein sequence ID" value="CAC81756.1"/>
    <property type="molecule type" value="mRNA"/>
</dbReference>
<dbReference type="EMBL" id="AC099667">
    <property type="status" value="NOT_ANNOTATED_CDS"/>
    <property type="molecule type" value="Genomic_DNA"/>
</dbReference>
<dbReference type="EMBL" id="BC130550">
    <property type="protein sequence ID" value="AAI30551.1"/>
    <property type="molecule type" value="mRNA"/>
</dbReference>
<dbReference type="EMBL" id="BC130552">
    <property type="protein sequence ID" value="AAI30553.1"/>
    <property type="molecule type" value="mRNA"/>
</dbReference>
<dbReference type="CCDS" id="CCDS46846.1"/>
<dbReference type="RefSeq" id="NP_995325.4">
    <property type="nucleotide sequence ID" value="NM_205853.4"/>
</dbReference>
<dbReference type="SMR" id="Q8IVN3"/>
<dbReference type="BioGRID" id="132988">
    <property type="interactions" value="13"/>
</dbReference>
<dbReference type="FunCoup" id="Q8IVN3">
    <property type="interactions" value="1"/>
</dbReference>
<dbReference type="STRING" id="9606.ENSP00000410910"/>
<dbReference type="GlyGen" id="Q8IVN3">
    <property type="glycosylation" value="1 site"/>
</dbReference>
<dbReference type="iPTMnet" id="Q8IVN3"/>
<dbReference type="PhosphoSitePlus" id="Q8IVN3"/>
<dbReference type="BioMuta" id="MUSTN1"/>
<dbReference type="jPOST" id="Q8IVN3"/>
<dbReference type="MassIVE" id="Q8IVN3"/>
<dbReference type="PaxDb" id="9606-ENSP00000410910"/>
<dbReference type="PeptideAtlas" id="Q8IVN3"/>
<dbReference type="ProteomicsDB" id="70747"/>
<dbReference type="Antibodypedia" id="78014">
    <property type="antibodies" value="3 antibodies from 3 providers"/>
</dbReference>
<dbReference type="DNASU" id="389125"/>
<dbReference type="Ensembl" id="ENST00000446157.3">
    <property type="protein sequence ID" value="ENSP00000410910.2"/>
    <property type="gene ID" value="ENSG00000272573.6"/>
</dbReference>
<dbReference type="GeneID" id="389125"/>
<dbReference type="KEGG" id="hsa:389125"/>
<dbReference type="MANE-Select" id="ENST00000446157.3">
    <property type="protein sequence ID" value="ENSP00000410910.2"/>
    <property type="RefSeq nucleotide sequence ID" value="NM_205853.4"/>
    <property type="RefSeq protein sequence ID" value="NP_995325.4"/>
</dbReference>
<dbReference type="UCSC" id="uc003dga.5">
    <property type="organism name" value="human"/>
</dbReference>
<dbReference type="AGR" id="HGNC:22144"/>
<dbReference type="CTD" id="389125"/>
<dbReference type="DisGeNET" id="389125"/>
<dbReference type="GeneCards" id="MUSTN1"/>
<dbReference type="HGNC" id="HGNC:22144">
    <property type="gene designation" value="MUSTN1"/>
</dbReference>
<dbReference type="HPA" id="ENSG00000272573">
    <property type="expression patterns" value="Tissue enriched (skeletal)"/>
</dbReference>
<dbReference type="MIM" id="617195">
    <property type="type" value="gene"/>
</dbReference>
<dbReference type="neXtProt" id="NX_Q8IVN3"/>
<dbReference type="OpenTargets" id="ENSG00000272573"/>
<dbReference type="PharmGKB" id="PA134991411"/>
<dbReference type="VEuPathDB" id="HostDB:ENSG00000272573"/>
<dbReference type="eggNOG" id="ENOG502S75P">
    <property type="taxonomic scope" value="Eukaryota"/>
</dbReference>
<dbReference type="GeneTree" id="ENSGT00940000153920"/>
<dbReference type="HOGENOM" id="CLU_193377_0_0_1"/>
<dbReference type="InParanoid" id="Q8IVN3"/>
<dbReference type="OMA" id="CEQMGSV"/>
<dbReference type="OrthoDB" id="9976882at2759"/>
<dbReference type="PAN-GO" id="Q8IVN3">
    <property type="GO annotations" value="0 GO annotations based on evolutionary models"/>
</dbReference>
<dbReference type="PhylomeDB" id="Q8IVN3"/>
<dbReference type="TreeFam" id="TF330732"/>
<dbReference type="PathwayCommons" id="Q8IVN3"/>
<dbReference type="SignaLink" id="Q8IVN3"/>
<dbReference type="BioGRID-ORCS" id="389125">
    <property type="hits" value="13 hits in 1109 CRISPR screens"/>
</dbReference>
<dbReference type="GenomeRNAi" id="389125"/>
<dbReference type="Pharos" id="Q8IVN3">
    <property type="development level" value="Tdark"/>
</dbReference>
<dbReference type="PRO" id="PR:Q8IVN3"/>
<dbReference type="Proteomes" id="UP000005640">
    <property type="component" value="Chromosome 3"/>
</dbReference>
<dbReference type="RNAct" id="Q8IVN3">
    <property type="molecule type" value="protein"/>
</dbReference>
<dbReference type="Bgee" id="ENSG00000272573">
    <property type="expression patterns" value="Expressed in popliteal artery and 97 other cell types or tissues"/>
</dbReference>
<dbReference type="ExpressionAtlas" id="Q8IVN3">
    <property type="expression patterns" value="baseline and differential"/>
</dbReference>
<dbReference type="GO" id="GO:0005737">
    <property type="term" value="C:cytoplasm"/>
    <property type="evidence" value="ECO:0007669"/>
    <property type="project" value="UniProtKB-SubCell"/>
</dbReference>
<dbReference type="GO" id="GO:0005576">
    <property type="term" value="C:extracellular region"/>
    <property type="evidence" value="ECO:0007669"/>
    <property type="project" value="UniProtKB-SubCell"/>
</dbReference>
<dbReference type="GO" id="GO:0005654">
    <property type="term" value="C:nucleoplasm"/>
    <property type="evidence" value="ECO:0007669"/>
    <property type="project" value="Ensembl"/>
</dbReference>
<dbReference type="GO" id="GO:0005634">
    <property type="term" value="C:nucleus"/>
    <property type="evidence" value="ECO:0000250"/>
    <property type="project" value="UniProtKB"/>
</dbReference>
<dbReference type="GO" id="GO:0002062">
    <property type="term" value="P:chondrocyte differentiation"/>
    <property type="evidence" value="ECO:0007669"/>
    <property type="project" value="InterPro"/>
</dbReference>
<dbReference type="GO" id="GO:0035988">
    <property type="term" value="P:chondrocyte proliferation"/>
    <property type="evidence" value="ECO:0007669"/>
    <property type="project" value="InterPro"/>
</dbReference>
<dbReference type="GO" id="GO:0030326">
    <property type="term" value="P:embryonic limb morphogenesis"/>
    <property type="evidence" value="ECO:0007669"/>
    <property type="project" value="Ensembl"/>
</dbReference>
<dbReference type="GO" id="GO:0042593">
    <property type="term" value="P:glucose homeostasis"/>
    <property type="evidence" value="ECO:0000250"/>
    <property type="project" value="UniProtKB"/>
</dbReference>
<dbReference type="GO" id="GO:0007517">
    <property type="term" value="P:muscle organ development"/>
    <property type="evidence" value="ECO:0007669"/>
    <property type="project" value="UniProtKB-KW"/>
</dbReference>
<dbReference type="GO" id="GO:0032332">
    <property type="term" value="P:positive regulation of chondrocyte differentiation"/>
    <property type="evidence" value="ECO:0007669"/>
    <property type="project" value="Ensembl"/>
</dbReference>
<dbReference type="GO" id="GO:1902732">
    <property type="term" value="P:positive regulation of chondrocyte proliferation"/>
    <property type="evidence" value="ECO:0007669"/>
    <property type="project" value="Ensembl"/>
</dbReference>
<dbReference type="GO" id="GO:0010628">
    <property type="term" value="P:positive regulation of gene expression"/>
    <property type="evidence" value="ECO:0007669"/>
    <property type="project" value="Ensembl"/>
</dbReference>
<dbReference type="GO" id="GO:0045663">
    <property type="term" value="P:positive regulation of myoblast differentiation"/>
    <property type="evidence" value="ECO:0000250"/>
    <property type="project" value="UniProtKB"/>
</dbReference>
<dbReference type="GO" id="GO:1902730">
    <property type="term" value="P:positive regulation of proteoglycan biosynthetic process"/>
    <property type="evidence" value="ECO:0007669"/>
    <property type="project" value="Ensembl"/>
</dbReference>
<dbReference type="GO" id="GO:0042246">
    <property type="term" value="P:tissue regeneration"/>
    <property type="evidence" value="ECO:0007669"/>
    <property type="project" value="Ensembl"/>
</dbReference>
<dbReference type="InterPro" id="IPR031394">
    <property type="entry name" value="MUSTN1"/>
</dbReference>
<dbReference type="Pfam" id="PF15682">
    <property type="entry name" value="Mustang"/>
    <property type="match status" value="1"/>
</dbReference>
<reference key="1">
    <citation type="submission" date="2000-03" db="EMBL/GenBank/DDBJ databases">
        <title>Full length sequencing of some human and murine muscular transcripts (Telethon Italy project B41).</title>
        <authorList>
            <person name="Ievolella C."/>
            <person name="Zara I."/>
            <person name="Millino C."/>
            <person name="Faulkner G."/>
            <person name="Lanfranchi G."/>
        </authorList>
    </citation>
    <scope>NUCLEOTIDE SEQUENCE [LARGE SCALE MRNA]</scope>
    <source>
        <tissue>Skeletal muscle</tissue>
    </source>
</reference>
<reference key="2">
    <citation type="journal article" date="2006" name="Nature">
        <title>The DNA sequence, annotation and analysis of human chromosome 3.</title>
        <authorList>
            <person name="Muzny D.M."/>
            <person name="Scherer S.E."/>
            <person name="Kaul R."/>
            <person name="Wang J."/>
            <person name="Yu J."/>
            <person name="Sudbrak R."/>
            <person name="Buhay C.J."/>
            <person name="Chen R."/>
            <person name="Cree A."/>
            <person name="Ding Y."/>
            <person name="Dugan-Rocha S."/>
            <person name="Gill R."/>
            <person name="Gunaratne P."/>
            <person name="Harris R.A."/>
            <person name="Hawes A.C."/>
            <person name="Hernandez J."/>
            <person name="Hodgson A.V."/>
            <person name="Hume J."/>
            <person name="Jackson A."/>
            <person name="Khan Z.M."/>
            <person name="Kovar-Smith C."/>
            <person name="Lewis L.R."/>
            <person name="Lozado R.J."/>
            <person name="Metzker M.L."/>
            <person name="Milosavljevic A."/>
            <person name="Miner G.R."/>
            <person name="Morgan M.B."/>
            <person name="Nazareth L.V."/>
            <person name="Scott G."/>
            <person name="Sodergren E."/>
            <person name="Song X.-Z."/>
            <person name="Steffen D."/>
            <person name="Wei S."/>
            <person name="Wheeler D.A."/>
            <person name="Wright M.W."/>
            <person name="Worley K.C."/>
            <person name="Yuan Y."/>
            <person name="Zhang Z."/>
            <person name="Adams C.Q."/>
            <person name="Ansari-Lari M.A."/>
            <person name="Ayele M."/>
            <person name="Brown M.J."/>
            <person name="Chen G."/>
            <person name="Chen Z."/>
            <person name="Clendenning J."/>
            <person name="Clerc-Blankenburg K.P."/>
            <person name="Chen R."/>
            <person name="Chen Z."/>
            <person name="Davis C."/>
            <person name="Delgado O."/>
            <person name="Dinh H.H."/>
            <person name="Dong W."/>
            <person name="Draper H."/>
            <person name="Ernst S."/>
            <person name="Fu G."/>
            <person name="Gonzalez-Garay M.L."/>
            <person name="Garcia D.K."/>
            <person name="Gillett W."/>
            <person name="Gu J."/>
            <person name="Hao B."/>
            <person name="Haugen E."/>
            <person name="Havlak P."/>
            <person name="He X."/>
            <person name="Hennig S."/>
            <person name="Hu S."/>
            <person name="Huang W."/>
            <person name="Jackson L.R."/>
            <person name="Jacob L.S."/>
            <person name="Kelly S.H."/>
            <person name="Kube M."/>
            <person name="Levy R."/>
            <person name="Li Z."/>
            <person name="Liu B."/>
            <person name="Liu J."/>
            <person name="Liu W."/>
            <person name="Lu J."/>
            <person name="Maheshwari M."/>
            <person name="Nguyen B.-V."/>
            <person name="Okwuonu G.O."/>
            <person name="Palmeiri A."/>
            <person name="Pasternak S."/>
            <person name="Perez L.M."/>
            <person name="Phelps K.A."/>
            <person name="Plopper F.J."/>
            <person name="Qiang B."/>
            <person name="Raymond C."/>
            <person name="Rodriguez R."/>
            <person name="Saenphimmachak C."/>
            <person name="Santibanez J."/>
            <person name="Shen H."/>
            <person name="Shen Y."/>
            <person name="Subramanian S."/>
            <person name="Tabor P.E."/>
            <person name="Verduzco D."/>
            <person name="Waldron L."/>
            <person name="Wang J."/>
            <person name="Wang J."/>
            <person name="Wang Q."/>
            <person name="Williams G.A."/>
            <person name="Wong G.K.-S."/>
            <person name="Yao Z."/>
            <person name="Zhang J."/>
            <person name="Zhang X."/>
            <person name="Zhao G."/>
            <person name="Zhou J."/>
            <person name="Zhou Y."/>
            <person name="Nelson D."/>
            <person name="Lehrach H."/>
            <person name="Reinhardt R."/>
            <person name="Naylor S.L."/>
            <person name="Yang H."/>
            <person name="Olson M."/>
            <person name="Weinstock G."/>
            <person name="Gibbs R.A."/>
        </authorList>
    </citation>
    <scope>NUCLEOTIDE SEQUENCE [LARGE SCALE GENOMIC DNA]</scope>
</reference>
<reference key="3">
    <citation type="journal article" date="2004" name="Genome Res.">
        <title>The status, quality, and expansion of the NIH full-length cDNA project: the Mammalian Gene Collection (MGC).</title>
        <authorList>
            <consortium name="The MGC Project Team"/>
        </authorList>
    </citation>
    <scope>NUCLEOTIDE SEQUENCE [LARGE SCALE MRNA]</scope>
    <source>
        <tissue>Brain</tissue>
    </source>
</reference>
<reference key="4">
    <citation type="journal article" date="2024" name="Mol. Metab.">
        <title>Mustn1 is a smooth muscle cell-secreted microprotein that modulates skeletal muscle extracellular matrix composition.</title>
        <authorList>
            <person name="Ducommun S."/>
            <person name="Jannig P.R."/>
            <person name="Cervenka I."/>
            <person name="Murgia M."/>
            <person name="Mittenbuehler M.J."/>
            <person name="Chernogubova E."/>
            <person name="Dias J.M."/>
            <person name="Jude B."/>
            <person name="Correia J.C."/>
            <person name="Van Vranken J.G."/>
            <person name="Ocana-Santero G."/>
            <person name="Porsmyr-Palmertz M."/>
            <person name="McCann Haworth S."/>
            <person name="Martinez-Redondo V."/>
            <person name="Liu Z."/>
            <person name="Carlstroem M."/>
            <person name="Mann M."/>
            <person name="Lanner J.T."/>
            <person name="Teixeira A.I."/>
            <person name="Maegdefessel L."/>
            <person name="Spiegelman B.M."/>
            <person name="Ruas J.L."/>
        </authorList>
    </citation>
    <scope>TISSUE SPECIFICITY</scope>
</reference>
<protein>
    <recommendedName>
        <fullName>Musculoskeletal embryonic nuclear protein 1</fullName>
    </recommendedName>
</protein>
<feature type="chain" id="PRO_0000299447" description="Musculoskeletal embryonic nuclear protein 1">
    <location>
        <begin position="1"/>
        <end position="82"/>
    </location>
</feature>
<feature type="region of interest" description="Disordered" evidence="4">
    <location>
        <begin position="1"/>
        <end position="33"/>
    </location>
</feature>
<feature type="region of interest" description="Disordered" evidence="4">
    <location>
        <begin position="49"/>
        <end position="82"/>
    </location>
</feature>
<feature type="short sequence motif" description="Nuclear localization signal" evidence="3">
    <location>
        <begin position="10"/>
        <end position="18"/>
    </location>
</feature>
<feature type="modified residue" description="Phosphoserine" evidence="1">
    <location>
        <position position="2"/>
    </location>
</feature>
<feature type="sequence conflict" description="In Ref. 1; CAC81756 and 3; AAI30551/AAI30553." evidence="6" ref="1 3">
    <original>D</original>
    <variation>E</variation>
    <location>
        <position position="20"/>
    </location>
</feature>
<comment type="function">
    <text evidence="2">Required for chondrocyte development and proliferation. Plays a role in myoblast differentiation and fusion. Modulates skeletal muscle extracellular matrix composition. Plays a role in skeletal muscle function. Plays a role in glucose homeostasis.</text>
</comment>
<comment type="subcellular location">
    <subcellularLocation>
        <location evidence="2">Nucleus</location>
    </subcellularLocation>
    <subcellularLocation>
        <location evidence="2">Cytoplasm</location>
    </subcellularLocation>
    <subcellularLocation>
        <location evidence="2">Secreted</location>
        <location evidence="2">Extracellular space</location>
    </subcellularLocation>
    <text evidence="2">Secreted from smooth muscle cells into the muscle extracellular space.</text>
</comment>
<comment type="tissue specificity">
    <text evidence="5">Expression in skeletal muscle is reduced during limb unloading but increases during the active recovery phase that follows.</text>
</comment>
<comment type="similarity">
    <text evidence="6">Belongs to the MUSTN1 family.</text>
</comment>
<gene>
    <name type="primary">MUSTN1</name>
</gene>
<accession>Q8IVN3</accession>
<evidence type="ECO:0000250" key="1">
    <source>
        <dbReference type="UniProtKB" id="Q80XX4"/>
    </source>
</evidence>
<evidence type="ECO:0000250" key="2">
    <source>
        <dbReference type="UniProtKB" id="Q99JI1"/>
    </source>
</evidence>
<evidence type="ECO:0000255" key="3"/>
<evidence type="ECO:0000256" key="4">
    <source>
        <dbReference type="SAM" id="MobiDB-lite"/>
    </source>
</evidence>
<evidence type="ECO:0000269" key="5">
    <source>
    </source>
</evidence>
<evidence type="ECO:0000305" key="6"/>
<proteinExistence type="evidence at protein level"/>